<feature type="chain" id="PRO_1000045316" description="Probable transcriptional regulatory protein CGSHiGG_04390">
    <location>
        <begin position="1"/>
        <end position="246"/>
    </location>
</feature>
<protein>
    <recommendedName>
        <fullName evidence="1">Probable transcriptional regulatory protein CGSHiGG_04390</fullName>
    </recommendedName>
</protein>
<proteinExistence type="inferred from homology"/>
<sequence>MAGHSKWANIKHRKAAQDAQRGKIFTKLIRELVTAAKIGGGDVSANPRLRAAVDKALSNNMTRDTINRAIDRGVGGGDDTNMETKIYEGYGPGGTAVMVECLSDNANRTISQVRPSFTKCGGNLGTEGSVGYLFSKKGLILIAEADEDALTEAAIEAGADDIQPQDDGSFEIYTAWEDLGSVRDGIEAAGFKVQEAEVTMIPSTTVDLDIETAPKLLRLIDMLEDCDDVQNVYHNGEICDEVASQL</sequence>
<dbReference type="EMBL" id="CP000672">
    <property type="protein sequence ID" value="ABQ99836.1"/>
    <property type="molecule type" value="Genomic_DNA"/>
</dbReference>
<dbReference type="SMR" id="A5UGD1"/>
<dbReference type="KEGG" id="hiq:CGSHiGG_04390"/>
<dbReference type="HOGENOM" id="CLU_062974_2_2_6"/>
<dbReference type="Proteomes" id="UP000001990">
    <property type="component" value="Chromosome"/>
</dbReference>
<dbReference type="GO" id="GO:0005829">
    <property type="term" value="C:cytosol"/>
    <property type="evidence" value="ECO:0007669"/>
    <property type="project" value="TreeGrafter"/>
</dbReference>
<dbReference type="GO" id="GO:0003677">
    <property type="term" value="F:DNA binding"/>
    <property type="evidence" value="ECO:0007669"/>
    <property type="project" value="UniProtKB-UniRule"/>
</dbReference>
<dbReference type="GO" id="GO:0006355">
    <property type="term" value="P:regulation of DNA-templated transcription"/>
    <property type="evidence" value="ECO:0007669"/>
    <property type="project" value="UniProtKB-UniRule"/>
</dbReference>
<dbReference type="FunFam" id="1.10.10.200:FF:000001">
    <property type="entry name" value="Probable transcriptional regulatory protein YebC"/>
    <property type="match status" value="1"/>
</dbReference>
<dbReference type="FunFam" id="3.30.70.980:FF:000002">
    <property type="entry name" value="Probable transcriptional regulatory protein YebC"/>
    <property type="match status" value="1"/>
</dbReference>
<dbReference type="Gene3D" id="1.10.10.200">
    <property type="match status" value="1"/>
</dbReference>
<dbReference type="Gene3D" id="3.30.70.980">
    <property type="match status" value="2"/>
</dbReference>
<dbReference type="HAMAP" id="MF_00693">
    <property type="entry name" value="Transcrip_reg_TACO1"/>
    <property type="match status" value="1"/>
</dbReference>
<dbReference type="InterPro" id="IPR017856">
    <property type="entry name" value="Integrase-like_N"/>
</dbReference>
<dbReference type="InterPro" id="IPR048300">
    <property type="entry name" value="TACO1_YebC-like_2nd/3rd_dom"/>
</dbReference>
<dbReference type="InterPro" id="IPR049083">
    <property type="entry name" value="TACO1_YebC_N"/>
</dbReference>
<dbReference type="InterPro" id="IPR002876">
    <property type="entry name" value="Transcrip_reg_TACO1-like"/>
</dbReference>
<dbReference type="InterPro" id="IPR026564">
    <property type="entry name" value="Transcrip_reg_TACO1-like_dom3"/>
</dbReference>
<dbReference type="InterPro" id="IPR029072">
    <property type="entry name" value="YebC-like"/>
</dbReference>
<dbReference type="NCBIfam" id="NF001030">
    <property type="entry name" value="PRK00110.1"/>
    <property type="match status" value="1"/>
</dbReference>
<dbReference type="NCBIfam" id="NF009044">
    <property type="entry name" value="PRK12378.1"/>
    <property type="match status" value="1"/>
</dbReference>
<dbReference type="NCBIfam" id="TIGR01033">
    <property type="entry name" value="YebC/PmpR family DNA-binding transcriptional regulator"/>
    <property type="match status" value="1"/>
</dbReference>
<dbReference type="PANTHER" id="PTHR12532:SF6">
    <property type="entry name" value="TRANSCRIPTIONAL REGULATORY PROTEIN YEBC-RELATED"/>
    <property type="match status" value="1"/>
</dbReference>
<dbReference type="PANTHER" id="PTHR12532">
    <property type="entry name" value="TRANSLATIONAL ACTIVATOR OF CYTOCHROME C OXIDASE 1"/>
    <property type="match status" value="1"/>
</dbReference>
<dbReference type="Pfam" id="PF20772">
    <property type="entry name" value="TACO1_YebC_N"/>
    <property type="match status" value="1"/>
</dbReference>
<dbReference type="Pfam" id="PF01709">
    <property type="entry name" value="Transcrip_reg"/>
    <property type="match status" value="1"/>
</dbReference>
<dbReference type="SUPFAM" id="SSF75625">
    <property type="entry name" value="YebC-like"/>
    <property type="match status" value="1"/>
</dbReference>
<evidence type="ECO:0000255" key="1">
    <source>
        <dbReference type="HAMAP-Rule" id="MF_00693"/>
    </source>
</evidence>
<reference key="1">
    <citation type="journal article" date="2007" name="Genome Biol.">
        <title>Characterization and modeling of the Haemophilus influenzae core and supragenomes based on the complete genomic sequences of Rd and 12 clinical nontypeable strains.</title>
        <authorList>
            <person name="Hogg J.S."/>
            <person name="Hu F.Z."/>
            <person name="Janto B."/>
            <person name="Boissy R."/>
            <person name="Hayes J."/>
            <person name="Keefe R."/>
            <person name="Post J.C."/>
            <person name="Ehrlich G.D."/>
        </authorList>
    </citation>
    <scope>NUCLEOTIDE SEQUENCE [LARGE SCALE GENOMIC DNA]</scope>
    <source>
        <strain>PittGG</strain>
    </source>
</reference>
<name>Y4390_HAEIG</name>
<keyword id="KW-0963">Cytoplasm</keyword>
<keyword id="KW-0238">DNA-binding</keyword>
<keyword id="KW-0804">Transcription</keyword>
<keyword id="KW-0805">Transcription regulation</keyword>
<accession>A5UGD1</accession>
<comment type="subcellular location">
    <subcellularLocation>
        <location evidence="1">Cytoplasm</location>
    </subcellularLocation>
</comment>
<comment type="similarity">
    <text evidence="1">Belongs to the TACO1 family.</text>
</comment>
<gene>
    <name type="ordered locus">CGSHiGG_04390</name>
</gene>
<organism>
    <name type="scientific">Haemophilus influenzae (strain PittGG)</name>
    <dbReference type="NCBI Taxonomy" id="374931"/>
    <lineage>
        <taxon>Bacteria</taxon>
        <taxon>Pseudomonadati</taxon>
        <taxon>Pseudomonadota</taxon>
        <taxon>Gammaproteobacteria</taxon>
        <taxon>Pasteurellales</taxon>
        <taxon>Pasteurellaceae</taxon>
        <taxon>Haemophilus</taxon>
    </lineage>
</organism>